<reference key="1">
    <citation type="journal article" date="2005" name="Nature">
        <title>Sequencing of Aspergillus nidulans and comparative analysis with A. fumigatus and A. oryzae.</title>
        <authorList>
            <person name="Galagan J.E."/>
            <person name="Calvo S.E."/>
            <person name="Cuomo C."/>
            <person name="Ma L.-J."/>
            <person name="Wortman J.R."/>
            <person name="Batzoglou S."/>
            <person name="Lee S.-I."/>
            <person name="Bastuerkmen M."/>
            <person name="Spevak C.C."/>
            <person name="Clutterbuck J."/>
            <person name="Kapitonov V."/>
            <person name="Jurka J."/>
            <person name="Scazzocchio C."/>
            <person name="Farman M.L."/>
            <person name="Butler J."/>
            <person name="Purcell S."/>
            <person name="Harris S."/>
            <person name="Braus G.H."/>
            <person name="Draht O."/>
            <person name="Busch S."/>
            <person name="D'Enfert C."/>
            <person name="Bouchier C."/>
            <person name="Goldman G.H."/>
            <person name="Bell-Pedersen D."/>
            <person name="Griffiths-Jones S."/>
            <person name="Doonan J.H."/>
            <person name="Yu J."/>
            <person name="Vienken K."/>
            <person name="Pain A."/>
            <person name="Freitag M."/>
            <person name="Selker E.U."/>
            <person name="Archer D.B."/>
            <person name="Penalva M.A."/>
            <person name="Oakley B.R."/>
            <person name="Momany M."/>
            <person name="Tanaka T."/>
            <person name="Kumagai T."/>
            <person name="Asai K."/>
            <person name="Machida M."/>
            <person name="Nierman W.C."/>
            <person name="Denning D.W."/>
            <person name="Caddick M.X."/>
            <person name="Hynes M."/>
            <person name="Paoletti M."/>
            <person name="Fischer R."/>
            <person name="Miller B.L."/>
            <person name="Dyer P.S."/>
            <person name="Sachs M.S."/>
            <person name="Osmani S.A."/>
            <person name="Birren B.W."/>
        </authorList>
    </citation>
    <scope>NUCLEOTIDE SEQUENCE [LARGE SCALE GENOMIC DNA]</scope>
    <source>
        <strain>FGSC A4 / ATCC 38163 / CBS 112.46 / NRRL 194 / M139</strain>
    </source>
</reference>
<reference key="2">
    <citation type="journal article" date="2009" name="Fungal Genet. Biol.">
        <title>The 2008 update of the Aspergillus nidulans genome annotation: a community effort.</title>
        <authorList>
            <person name="Wortman J.R."/>
            <person name="Gilsenan J.M."/>
            <person name="Joardar V."/>
            <person name="Deegan J."/>
            <person name="Clutterbuck J."/>
            <person name="Andersen M.R."/>
            <person name="Archer D."/>
            <person name="Bencina M."/>
            <person name="Braus G."/>
            <person name="Coutinho P."/>
            <person name="von Dohren H."/>
            <person name="Doonan J."/>
            <person name="Driessen A.J."/>
            <person name="Durek P."/>
            <person name="Espeso E."/>
            <person name="Fekete E."/>
            <person name="Flipphi M."/>
            <person name="Estrada C.G."/>
            <person name="Geysens S."/>
            <person name="Goldman G."/>
            <person name="de Groot P.W."/>
            <person name="Hansen K."/>
            <person name="Harris S.D."/>
            <person name="Heinekamp T."/>
            <person name="Helmstaedt K."/>
            <person name="Henrissat B."/>
            <person name="Hofmann G."/>
            <person name="Homan T."/>
            <person name="Horio T."/>
            <person name="Horiuchi H."/>
            <person name="James S."/>
            <person name="Jones M."/>
            <person name="Karaffa L."/>
            <person name="Karanyi Z."/>
            <person name="Kato M."/>
            <person name="Keller N."/>
            <person name="Kelly D.E."/>
            <person name="Kiel J.A."/>
            <person name="Kim J.M."/>
            <person name="van der Klei I.J."/>
            <person name="Klis F.M."/>
            <person name="Kovalchuk A."/>
            <person name="Krasevec N."/>
            <person name="Kubicek C.P."/>
            <person name="Liu B."/>
            <person name="Maccabe A."/>
            <person name="Meyer V."/>
            <person name="Mirabito P."/>
            <person name="Miskei M."/>
            <person name="Mos M."/>
            <person name="Mullins J."/>
            <person name="Nelson D.R."/>
            <person name="Nielsen J."/>
            <person name="Oakley B.R."/>
            <person name="Osmani S.A."/>
            <person name="Pakula T."/>
            <person name="Paszewski A."/>
            <person name="Paulsen I."/>
            <person name="Pilsyk S."/>
            <person name="Pocsi I."/>
            <person name="Punt P.J."/>
            <person name="Ram A.F."/>
            <person name="Ren Q."/>
            <person name="Robellet X."/>
            <person name="Robson G."/>
            <person name="Seiboth B."/>
            <person name="van Solingen P."/>
            <person name="Specht T."/>
            <person name="Sun J."/>
            <person name="Taheri-Talesh N."/>
            <person name="Takeshita N."/>
            <person name="Ussery D."/>
            <person name="vanKuyk P.A."/>
            <person name="Visser H."/>
            <person name="van de Vondervoort P.J."/>
            <person name="de Vries R.P."/>
            <person name="Walton J."/>
            <person name="Xiang X."/>
            <person name="Xiong Y."/>
            <person name="Zeng A.P."/>
            <person name="Brandt B.W."/>
            <person name="Cornell M.J."/>
            <person name="van den Hondel C.A."/>
            <person name="Visser J."/>
            <person name="Oliver S.G."/>
            <person name="Turner G."/>
        </authorList>
    </citation>
    <scope>GENOME REANNOTATION</scope>
    <source>
        <strain>FGSC A4 / ATCC 38163 / CBS 112.46 / NRRL 194 / M139</strain>
    </source>
</reference>
<reference key="3">
    <citation type="journal article" date="1973" name="Eur. J. Biochem.">
        <title>The genetic control of molybdoflavoproteins in Aspergillus nidulans. Allopurinol-resistant mutants constitutive for xanthine-dehydrogenase.</title>
        <authorList>
            <person name="Scazzocchio C."/>
            <person name="Holl F.B."/>
            <person name="Foguelman A.I."/>
        </authorList>
    </citation>
    <scope>FUNCTION</scope>
    <scope>CATALYTIC ACTIVITY</scope>
    <scope>INDUCTION</scope>
</reference>
<reference key="4">
    <citation type="journal article" date="1978" name="Eur. J. Biochem.">
        <title>The genetic control of the molybdoflavoproteins in Aspergillus nidulans. IV. A comparison between purine hydroxylase I and II.</title>
        <authorList>
            <person name="Lewis N.J."/>
            <person name="Hurt P."/>
            <person name="Sealy-Lewis H.M."/>
            <person name="Scazzocchio C."/>
        </authorList>
    </citation>
    <scope>FUNCTION</scope>
    <scope>CATALYTIC ACTIVITY</scope>
    <scope>BIOPHYSICOCHEMICAL PROPERTIES</scope>
    <scope>ACTIVITY REGULATION</scope>
</reference>
<reference key="5">
    <citation type="journal article" date="2017" name="Open Biol.">
        <title>A eukaryotic nicotinate-inducible gene cluster: convergent evolution in fungi and bacteria.</title>
        <authorList>
            <person name="Amon J."/>
            <person name="Fernandez-Martin R."/>
            <person name="Bokor E."/>
            <person name="Cultrone A."/>
            <person name="Kelly J.M."/>
            <person name="Flipphi M."/>
            <person name="Scazzocchio C."/>
            <person name="Hamari Z."/>
        </authorList>
    </citation>
    <scope>IDENTIFICATION</scope>
    <scope>INDUCTION</scope>
    <scope>FUNCTION</scope>
    <scope>BIOPHYSICOCHEMICAL PROPERTIES</scope>
    <scope>CATALYTIC ACTIVITY</scope>
</reference>
<dbReference type="EC" id="1.-.-.-" evidence="4 5 6"/>
<dbReference type="EMBL" id="AACD01000170">
    <property type="protein sequence ID" value="EAA61469.1"/>
    <property type="molecule type" value="Genomic_DNA"/>
</dbReference>
<dbReference type="EMBL" id="BN001306">
    <property type="protein sequence ID" value="CBF82379.1"/>
    <property type="molecule type" value="Genomic_DNA"/>
</dbReference>
<dbReference type="RefSeq" id="XP_682447.1">
    <property type="nucleotide sequence ID" value="XM_677355.1"/>
</dbReference>
<dbReference type="SMR" id="A0A1U8QNG8"/>
<dbReference type="STRING" id="227321.A0A1U8QNG8"/>
<dbReference type="EnsemblFungi" id="CBF82379">
    <property type="protein sequence ID" value="CBF82379"/>
    <property type="gene ID" value="ANIA_09178"/>
</dbReference>
<dbReference type="KEGG" id="ani:ANIA_09178"/>
<dbReference type="eggNOG" id="KOG0430">
    <property type="taxonomic scope" value="Eukaryota"/>
</dbReference>
<dbReference type="InParanoid" id="A0A1U8QNG8"/>
<dbReference type="OMA" id="QCRWKVG"/>
<dbReference type="OrthoDB" id="8300278at2759"/>
<dbReference type="Proteomes" id="UP000000560">
    <property type="component" value="Chromosome VI"/>
</dbReference>
<dbReference type="GO" id="GO:0051537">
    <property type="term" value="F:2 iron, 2 sulfur cluster binding"/>
    <property type="evidence" value="ECO:0007669"/>
    <property type="project" value="UniProtKB-KW"/>
</dbReference>
<dbReference type="GO" id="GO:0071949">
    <property type="term" value="F:FAD binding"/>
    <property type="evidence" value="ECO:0007669"/>
    <property type="project" value="InterPro"/>
</dbReference>
<dbReference type="GO" id="GO:0005506">
    <property type="term" value="F:iron ion binding"/>
    <property type="evidence" value="ECO:0007669"/>
    <property type="project" value="InterPro"/>
</dbReference>
<dbReference type="GO" id="GO:0016491">
    <property type="term" value="F:oxidoreductase activity"/>
    <property type="evidence" value="ECO:0000318"/>
    <property type="project" value="GO_Central"/>
</dbReference>
<dbReference type="FunFam" id="3.30.365.10:FF:000003">
    <property type="entry name" value="Aldehyde oxidase 1"/>
    <property type="match status" value="1"/>
</dbReference>
<dbReference type="FunFam" id="3.30.365.10:FF:000002">
    <property type="entry name" value="Xanthine dehydrogenase oxidase"/>
    <property type="match status" value="1"/>
</dbReference>
<dbReference type="Gene3D" id="3.10.20.30">
    <property type="match status" value="1"/>
</dbReference>
<dbReference type="Gene3D" id="3.30.465.10">
    <property type="match status" value="1"/>
</dbReference>
<dbReference type="Gene3D" id="1.10.150.120">
    <property type="entry name" value="[2Fe-2S]-binding domain"/>
    <property type="match status" value="1"/>
</dbReference>
<dbReference type="Gene3D" id="3.90.1170.50">
    <property type="entry name" value="Aldehyde oxidase/xanthine dehydrogenase, a/b hammerhead"/>
    <property type="match status" value="1"/>
</dbReference>
<dbReference type="Gene3D" id="3.30.365.10">
    <property type="entry name" value="Aldehyde oxidase/xanthine dehydrogenase, molybdopterin binding domain"/>
    <property type="match status" value="4"/>
</dbReference>
<dbReference type="Gene3D" id="3.30.390.50">
    <property type="entry name" value="CO dehydrogenase flavoprotein, C-terminal domain"/>
    <property type="match status" value="1"/>
</dbReference>
<dbReference type="Gene3D" id="3.30.43.10">
    <property type="entry name" value="Uridine Diphospho-n-acetylenolpyruvylglucosamine Reductase, domain 2"/>
    <property type="match status" value="1"/>
</dbReference>
<dbReference type="InterPro" id="IPR002888">
    <property type="entry name" value="2Fe-2S-bd"/>
</dbReference>
<dbReference type="InterPro" id="IPR036884">
    <property type="entry name" value="2Fe-2S-bd_dom_sf"/>
</dbReference>
<dbReference type="InterPro" id="IPR036010">
    <property type="entry name" value="2Fe-2S_ferredoxin-like_sf"/>
</dbReference>
<dbReference type="InterPro" id="IPR000674">
    <property type="entry name" value="Ald_Oxase/Xan_DH_a/b"/>
</dbReference>
<dbReference type="InterPro" id="IPR036856">
    <property type="entry name" value="Ald_Oxase/Xan_DH_a/b_sf"/>
</dbReference>
<dbReference type="InterPro" id="IPR016208">
    <property type="entry name" value="Ald_Oxase/xanthine_DH-like"/>
</dbReference>
<dbReference type="InterPro" id="IPR008274">
    <property type="entry name" value="AldOxase/xan_DH_MoCoBD1"/>
</dbReference>
<dbReference type="InterPro" id="IPR046867">
    <property type="entry name" value="AldOxase/xan_DH_MoCoBD2"/>
</dbReference>
<dbReference type="InterPro" id="IPR037165">
    <property type="entry name" value="AldOxase/xan_DH_Mopterin-bd_sf"/>
</dbReference>
<dbReference type="InterPro" id="IPR012675">
    <property type="entry name" value="Beta-grasp_dom_sf"/>
</dbReference>
<dbReference type="InterPro" id="IPR005107">
    <property type="entry name" value="CO_DH_flav_C"/>
</dbReference>
<dbReference type="InterPro" id="IPR036683">
    <property type="entry name" value="CO_DH_flav_C_dom_sf"/>
</dbReference>
<dbReference type="InterPro" id="IPR016166">
    <property type="entry name" value="FAD-bd_PCMH"/>
</dbReference>
<dbReference type="InterPro" id="IPR036318">
    <property type="entry name" value="FAD-bd_PCMH-like_sf"/>
</dbReference>
<dbReference type="InterPro" id="IPR016167">
    <property type="entry name" value="FAD-bd_PCMH_sub1"/>
</dbReference>
<dbReference type="InterPro" id="IPR016169">
    <property type="entry name" value="FAD-bd_PCMH_sub2"/>
</dbReference>
<dbReference type="InterPro" id="IPR002346">
    <property type="entry name" value="Mopterin_DH_FAD-bd"/>
</dbReference>
<dbReference type="PANTHER" id="PTHR45444">
    <property type="entry name" value="XANTHINE DEHYDROGENASE"/>
    <property type="match status" value="1"/>
</dbReference>
<dbReference type="PANTHER" id="PTHR45444:SF3">
    <property type="entry name" value="XANTHINE DEHYDROGENASE"/>
    <property type="match status" value="1"/>
</dbReference>
<dbReference type="Pfam" id="PF01315">
    <property type="entry name" value="Ald_Xan_dh_C"/>
    <property type="match status" value="1"/>
</dbReference>
<dbReference type="Pfam" id="PF03450">
    <property type="entry name" value="CO_deh_flav_C"/>
    <property type="match status" value="1"/>
</dbReference>
<dbReference type="Pfam" id="PF00941">
    <property type="entry name" value="FAD_binding_5"/>
    <property type="match status" value="1"/>
</dbReference>
<dbReference type="Pfam" id="PF01799">
    <property type="entry name" value="Fer2_2"/>
    <property type="match status" value="1"/>
</dbReference>
<dbReference type="Pfam" id="PF02738">
    <property type="entry name" value="MoCoBD_1"/>
    <property type="match status" value="1"/>
</dbReference>
<dbReference type="Pfam" id="PF20256">
    <property type="entry name" value="MoCoBD_2"/>
    <property type="match status" value="1"/>
</dbReference>
<dbReference type="PIRSF" id="PIRSF000127">
    <property type="entry name" value="Xanthine_DH"/>
    <property type="match status" value="1"/>
</dbReference>
<dbReference type="SMART" id="SM01008">
    <property type="entry name" value="Ald_Xan_dh_C"/>
    <property type="match status" value="1"/>
</dbReference>
<dbReference type="SMART" id="SM01092">
    <property type="entry name" value="CO_deh_flav_C"/>
    <property type="match status" value="1"/>
</dbReference>
<dbReference type="SUPFAM" id="SSF54292">
    <property type="entry name" value="2Fe-2S ferredoxin-like"/>
    <property type="match status" value="1"/>
</dbReference>
<dbReference type="SUPFAM" id="SSF55447">
    <property type="entry name" value="CO dehydrogenase flavoprotein C-terminal domain-like"/>
    <property type="match status" value="1"/>
</dbReference>
<dbReference type="SUPFAM" id="SSF47741">
    <property type="entry name" value="CO dehydrogenase ISP C-domain like"/>
    <property type="match status" value="1"/>
</dbReference>
<dbReference type="SUPFAM" id="SSF54665">
    <property type="entry name" value="CO dehydrogenase molybdoprotein N-domain-like"/>
    <property type="match status" value="1"/>
</dbReference>
<dbReference type="SUPFAM" id="SSF56176">
    <property type="entry name" value="FAD-binding/transporter-associated domain-like"/>
    <property type="match status" value="1"/>
</dbReference>
<dbReference type="SUPFAM" id="SSF56003">
    <property type="entry name" value="Molybdenum cofactor-binding domain"/>
    <property type="match status" value="1"/>
</dbReference>
<dbReference type="PROSITE" id="PS51387">
    <property type="entry name" value="FAD_PCMH"/>
    <property type="match status" value="1"/>
</dbReference>
<feature type="chain" id="PRO_0000443339" description="Nicotinate hydroxylase hnxS">
    <location>
        <begin position="1"/>
        <end position="1350"/>
    </location>
</feature>
<feature type="domain" description="FAD-binding PCMH-type" evidence="2">
    <location>
        <begin position="256"/>
        <end position="445"/>
    </location>
</feature>
<feature type="region of interest" description="Disordered" evidence="3">
    <location>
        <begin position="164"/>
        <end position="193"/>
    </location>
</feature>
<feature type="compositionally biased region" description="Low complexity" evidence="3">
    <location>
        <begin position="180"/>
        <end position="192"/>
    </location>
</feature>
<feature type="active site" description="Proton acceptor" evidence="1">
    <location>
        <position position="1281"/>
    </location>
</feature>
<feature type="binding site" evidence="1">
    <location>
        <position position="49"/>
    </location>
    <ligand>
        <name>[2Fe-2S] cluster</name>
        <dbReference type="ChEBI" id="CHEBI:190135"/>
        <label>1</label>
    </ligand>
</feature>
<feature type="binding site" evidence="1">
    <location>
        <position position="54"/>
    </location>
    <ligand>
        <name>[2Fe-2S] cluster</name>
        <dbReference type="ChEBI" id="CHEBI:190135"/>
        <label>1</label>
    </ligand>
</feature>
<feature type="binding site" evidence="1">
    <location>
        <position position="89"/>
    </location>
    <ligand>
        <name>[2Fe-2S] cluster</name>
        <dbReference type="ChEBI" id="CHEBI:190135"/>
        <label>2</label>
    </ligand>
</feature>
<feature type="binding site" evidence="1">
    <location>
        <position position="92"/>
    </location>
    <ligand>
        <name>[2Fe-2S] cluster</name>
        <dbReference type="ChEBI" id="CHEBI:190135"/>
        <label>2</label>
    </ligand>
</feature>
<feature type="binding site" evidence="1">
    <location>
        <position position="133"/>
    </location>
    <ligand>
        <name>[2Fe-2S] cluster</name>
        <dbReference type="ChEBI" id="CHEBI:190135"/>
        <label>2</label>
    </ligand>
</feature>
<feature type="binding site" evidence="1">
    <location>
        <position position="135"/>
    </location>
    <ligand>
        <name>[2Fe-2S] cluster</name>
        <dbReference type="ChEBI" id="CHEBI:190135"/>
        <label>2</label>
    </ligand>
</feature>
<feature type="binding site" evidence="1">
    <location>
        <begin position="284"/>
        <end position="291"/>
    </location>
    <ligand>
        <name>FAD</name>
        <dbReference type="ChEBI" id="CHEBI:57692"/>
    </ligand>
</feature>
<feature type="binding site" evidence="1">
    <location>
        <begin position="379"/>
        <end position="383"/>
    </location>
    <ligand>
        <name>FAD</name>
        <dbReference type="ChEBI" id="CHEBI:57692"/>
    </ligand>
</feature>
<feature type="binding site" evidence="1">
    <location>
        <position position="392"/>
    </location>
    <ligand>
        <name>FAD</name>
        <dbReference type="ChEBI" id="CHEBI:57692"/>
    </ligand>
</feature>
<feature type="binding site" evidence="1">
    <location>
        <position position="455"/>
    </location>
    <ligand>
        <name>FAD</name>
        <dbReference type="ChEBI" id="CHEBI:57692"/>
    </ligand>
</feature>
<feature type="binding site" evidence="1">
    <location>
        <position position="793"/>
    </location>
    <ligand>
        <name>Mo-molybdopterin</name>
        <dbReference type="ChEBI" id="CHEBI:71302"/>
    </ligand>
    <ligandPart>
        <name>Mo</name>
        <dbReference type="ChEBI" id="CHEBI:28685"/>
    </ligandPart>
</feature>
<feature type="binding site" evidence="1">
    <location>
        <position position="824"/>
    </location>
    <ligand>
        <name>Mo-molybdopterin</name>
        <dbReference type="ChEBI" id="CHEBI:71302"/>
    </ligand>
    <ligandPart>
        <name>Mo</name>
        <dbReference type="ChEBI" id="CHEBI:28685"/>
    </ligandPart>
</feature>
<feature type="binding site" evidence="1">
    <location>
        <position position="828"/>
    </location>
    <ligand>
        <name>substrate</name>
    </ligand>
</feature>
<feature type="binding site" evidence="1">
    <location>
        <position position="906"/>
    </location>
    <ligand>
        <name>substrate</name>
    </ligand>
</feature>
<feature type="binding site" evidence="1">
    <location>
        <position position="938"/>
    </location>
    <ligand>
        <name>Mo-molybdopterin</name>
        <dbReference type="ChEBI" id="CHEBI:71302"/>
    </ligand>
    <ligandPart>
        <name>Mo</name>
        <dbReference type="ChEBI" id="CHEBI:28685"/>
    </ligandPart>
</feature>
<feature type="binding site" evidence="1">
    <location>
        <position position="1107"/>
    </location>
    <ligand>
        <name>Mo-molybdopterin</name>
        <dbReference type="ChEBI" id="CHEBI:71302"/>
    </ligand>
    <ligandPart>
        <name>Mo</name>
        <dbReference type="ChEBI" id="CHEBI:28685"/>
    </ligandPart>
</feature>
<accession>A0A1U8QNG8</accession>
<accession>C8VJV8</accession>
<accession>Q5ARA2</accession>
<sequence>MDALLPRSSPQLKFYLNGTPISLTSPHPRWTLLDFIRSQDGLKGTKLGCGEGGCGALSGKHVITIEGLGTVDHPHPLQERIAQLHGSQCGFCTPGIVMSLYAMIRNAYDPVTGKFQLSADDIESKGHLDGNLCRCTGYKPILNAARTFIEDDLGSVPSIVESELVGTEEETESDMGAHSGSGDTGSRSSGSCGRPGGCCKDSPGISSCSSRETDMTTPSLPDSPVLKQYDFIPYTPTTELIYPPGLAKFVPELLCYGDAEQAWVKPRSVQEALEILSQCPSATLVTGASEVQVDVRFKDFRPSVSVFVGDITEMTGISWSEDMKTLYIGGSASLSDIEAECLRCIPLLKAVNLGSESVLSAIARTLRYFAGRQIRNAACLAGNIATASPISDMNPLLLAVGATVHARTSAEETTIPMSEMFKGYRKTALPSGSLITKIAVPMPSKDQIEIVNAYKQAKRKDDDIAIVTAAFRVRIAPGPDYTVQEASLAFGGMAPTTVLAHKTASALEGKRWGDEAVLDIVLTSLGEEFNLPYSVPGGMATYRRTLTLSLFVRFWNYVNQKLGLEYDSDLIEEIHRGISTGTRDDDNPHAQRVVGQQIPHLSGLKHATGEAEYVDDMPPLHRELHGALVLSERAHAKILSVNWTPALERGAVGYVDHTSLPEEKNHWGPVVHDEPVFAKGEVHAHGQPIGLVYADDAMTAQIAAKAVIVTYEDLPAILTIDEAIEARSFFNYGKELRRGAPPEEIRKELDDCEYTLSGTTKIGGQEHFYLETNAAIAVPHTEDGSMDVWSSTQNTMETQDFLSQVTNVPRHKINARVRRMGGAFGGKESRSVPIACIVAVAAKKARRPVRIMLNRDEDMMTSGQRHPVQCRWKVGFNREGKLLVLDADTYNNAGYSVDMSAAVMDRCLTHIENCYYIPNVWLRGWVCKTNTHSNTAFRGFGAPQAMYITESIISAVAEKVGIDVDEIRRRNLYQVGQRTPFNQVLDEDWHVPLLLEQVREEADYDARKKEIERFNSEHRWRKRGIALIPTKFGISFATALHLNQASAAVRVYTDGSVLLNHGGTEMGQGLYTKMVQVAAQELRVPVDQVYTQDTSSYQTANASPTAASSGSDLNGMAIKHACDQINERLRPYREKYGEDADLGTIAKAAYRDRVNLSAAGYYKMPTIGYEWGNYSENVKPMYFYFTQRQGVACTEVELDLLTGTHTVLRADLKMDIGRSINPAIDYGQIEGAFVQGQGLFTMEESLWTRSGQLATRGPGTYKIPGFADIPQVFNSSKGIGEPPLFMGSSVLFALRDALSHARRERGVSEPLVLDSPATVERLRLAVGDDLVHRAQVQRKDGEQGFFVAVA</sequence>
<organism>
    <name type="scientific">Emericella nidulans (strain FGSC A4 / ATCC 38163 / CBS 112.46 / NRRL 194 / M139)</name>
    <name type="common">Aspergillus nidulans</name>
    <dbReference type="NCBI Taxonomy" id="227321"/>
    <lineage>
        <taxon>Eukaryota</taxon>
        <taxon>Fungi</taxon>
        <taxon>Dikarya</taxon>
        <taxon>Ascomycota</taxon>
        <taxon>Pezizomycotina</taxon>
        <taxon>Eurotiomycetes</taxon>
        <taxon>Eurotiomycetidae</taxon>
        <taxon>Eurotiales</taxon>
        <taxon>Aspergillaceae</taxon>
        <taxon>Aspergillus</taxon>
        <taxon>Aspergillus subgen. Nidulantes</taxon>
    </lineage>
</organism>
<evidence type="ECO:0000250" key="1">
    <source>
        <dbReference type="UniProtKB" id="P80457"/>
    </source>
</evidence>
<evidence type="ECO:0000255" key="2">
    <source>
        <dbReference type="PROSITE-ProRule" id="PRU00718"/>
    </source>
</evidence>
<evidence type="ECO:0000256" key="3">
    <source>
        <dbReference type="SAM" id="MobiDB-lite"/>
    </source>
</evidence>
<evidence type="ECO:0000269" key="4">
    <source>
    </source>
</evidence>
<evidence type="ECO:0000269" key="5">
    <source>
    </source>
</evidence>
<evidence type="ECO:0000269" key="6">
    <source>
    </source>
</evidence>
<evidence type="ECO:0000303" key="7">
    <source>
    </source>
</evidence>
<evidence type="ECO:0000303" key="8">
    <source>
    </source>
</evidence>
<evidence type="ECO:0000303" key="9">
    <source>
    </source>
</evidence>
<evidence type="ECO:0000305" key="10"/>
<gene>
    <name evidence="7" type="primary">hxnS</name>
    <name type="ORF">ANIA_91782</name>
</gene>
<comment type="function">
    <text evidence="4 5 6">Nicotinate hydroxylase, part of the hnx cluster involved in the purine degradation (PubMed:4581274). The nicotinate hydroxylase hnxS accepts nicotinate as a substrate and catalyzes the first step of nicotinate catabolism (PubMed:4581274). HnxS also accepts hypoxanthine, but not xanthine, as a substrate (PubMed:29212709, PubMed:363427, PubMed:4581274). The major facilitator-type transporters hxnP and hxnZ are probably involved in the uptake of nicotinate-derived metabolites, and the oxidoreductases hxnT and hxnY in the further metabolism of 6-OH nicotinic acid (PubMed:4581274).</text>
</comment>
<comment type="cofactor">
    <cofactor evidence="1">
        <name>[2Fe-2S] cluster</name>
        <dbReference type="ChEBI" id="CHEBI:190135"/>
    </cofactor>
    <text evidence="1">Binds 2 [2Fe-2S] clusters.</text>
</comment>
<comment type="cofactor">
    <cofactor evidence="1">
        <name>FAD</name>
        <dbReference type="ChEBI" id="CHEBI:57692"/>
    </cofactor>
</comment>
<comment type="cofactor">
    <cofactor evidence="1">
        <name>Mo-molybdopterin</name>
        <dbReference type="ChEBI" id="CHEBI:71302"/>
    </cofactor>
    <text evidence="1">Binds 1 Mo-molybdopterin (Mo-MPT) cofactor per subunit.</text>
</comment>
<comment type="activity regulation">
    <text evidence="5">Allopurinol inhibits catalytic activity in a linear fashion (PubMed:363427).</text>
</comment>
<comment type="biophysicochemical properties">
    <kinetics>
        <KM evidence="5">90.4 uM for hypoxanthine</KM>
        <KM evidence="5">36.15 uM for 2-hydroxypurine</KM>
        <KM evidence="5">524.5 uM for 6,8-dihydroxypurine</KM>
        <KM evidence="5">188.6 uM for nicotinate</KM>
    </kinetics>
    <phDependence>
        <text evidence="5">Optimum pH is 9.4.</text>
    </phDependence>
</comment>
<comment type="induction">
    <text evidence="4 6">Expression is induced by nicotinate and 6-OH nicotinate, subject to nitrogen metabolite repression mediated by the GATA factor areA, and strictly regulated by the cluster-specific transcription regulator hnxR (PubMed:29212709, PubMed:4581274).</text>
</comment>
<comment type="similarity">
    <text evidence="10">Belongs to the xanthine dehydrogenase family.</text>
</comment>
<protein>
    <recommendedName>
        <fullName evidence="7">Nicotinate hydroxylase hnxS</fullName>
        <ecNumber evidence="4 5 6">1.-.-.-</ecNumber>
    </recommendedName>
    <alternativeName>
        <fullName evidence="8">Nicotinate catabolism cluster protein hxnS</fullName>
    </alternativeName>
    <alternativeName>
        <fullName evidence="8">Purine hydroxylase II</fullName>
        <shortName evidence="8">PHII</shortName>
    </alternativeName>
    <alternativeName>
        <fullName evidence="9">Xanthine dehydrogenase II</fullName>
    </alternativeName>
</protein>
<keyword id="KW-0001">2Fe-2S</keyword>
<keyword id="KW-0274">FAD</keyword>
<keyword id="KW-0285">Flavoprotein</keyword>
<keyword id="KW-0408">Iron</keyword>
<keyword id="KW-0411">Iron-sulfur</keyword>
<keyword id="KW-0479">Metal-binding</keyword>
<keyword id="KW-0500">Molybdenum</keyword>
<keyword id="KW-0560">Oxidoreductase</keyword>
<keyword id="KW-1185">Reference proteome</keyword>
<proteinExistence type="evidence at protein level"/>
<name>HXNS_EMENI</name>